<reference key="1">
    <citation type="journal article" date="2009" name="Environ. Microbiol.">
        <title>Genome sequence of Desulfobacterium autotrophicum HRM2, a marine sulfate reducer oxidizing organic carbon completely to carbon dioxide.</title>
        <authorList>
            <person name="Strittmatter A.W."/>
            <person name="Liesegang H."/>
            <person name="Rabus R."/>
            <person name="Decker I."/>
            <person name="Amann J."/>
            <person name="Andres S."/>
            <person name="Henne A."/>
            <person name="Fricke W.F."/>
            <person name="Martinez-Arias R."/>
            <person name="Bartels D."/>
            <person name="Goesmann A."/>
            <person name="Krause L."/>
            <person name="Puehler A."/>
            <person name="Klenk H.P."/>
            <person name="Richter M."/>
            <person name="Schuler M."/>
            <person name="Gloeckner F.O."/>
            <person name="Meyerdierks A."/>
            <person name="Gottschalk G."/>
            <person name="Amann R."/>
        </authorList>
    </citation>
    <scope>NUCLEOTIDE SEQUENCE [LARGE SCALE GENOMIC DNA]</scope>
    <source>
        <strain>ATCC 43914 / DSM 3382 / VKM B-1955 / HRM2</strain>
    </source>
</reference>
<dbReference type="EC" id="2.2.1.2" evidence="1"/>
<dbReference type="EMBL" id="CP001087">
    <property type="protein sequence ID" value="ACN15841.1"/>
    <property type="molecule type" value="Genomic_DNA"/>
</dbReference>
<dbReference type="RefSeq" id="WP_015904604.1">
    <property type="nucleotide sequence ID" value="NC_012108.1"/>
</dbReference>
<dbReference type="SMR" id="C0QIA5"/>
<dbReference type="STRING" id="177437.HRM2_27510"/>
<dbReference type="KEGG" id="dat:HRM2_27510"/>
<dbReference type="eggNOG" id="COG0176">
    <property type="taxonomic scope" value="Bacteria"/>
</dbReference>
<dbReference type="HOGENOM" id="CLU_079764_0_0_7"/>
<dbReference type="OrthoDB" id="9807051at2"/>
<dbReference type="UniPathway" id="UPA00115">
    <property type="reaction ID" value="UER00414"/>
</dbReference>
<dbReference type="Proteomes" id="UP000000442">
    <property type="component" value="Chromosome"/>
</dbReference>
<dbReference type="GO" id="GO:0005737">
    <property type="term" value="C:cytoplasm"/>
    <property type="evidence" value="ECO:0007669"/>
    <property type="project" value="UniProtKB-SubCell"/>
</dbReference>
<dbReference type="GO" id="GO:0016832">
    <property type="term" value="F:aldehyde-lyase activity"/>
    <property type="evidence" value="ECO:0007669"/>
    <property type="project" value="InterPro"/>
</dbReference>
<dbReference type="GO" id="GO:0004801">
    <property type="term" value="F:transaldolase activity"/>
    <property type="evidence" value="ECO:0007669"/>
    <property type="project" value="UniProtKB-UniRule"/>
</dbReference>
<dbReference type="GO" id="GO:0005975">
    <property type="term" value="P:carbohydrate metabolic process"/>
    <property type="evidence" value="ECO:0007669"/>
    <property type="project" value="InterPro"/>
</dbReference>
<dbReference type="GO" id="GO:0006098">
    <property type="term" value="P:pentose-phosphate shunt"/>
    <property type="evidence" value="ECO:0007669"/>
    <property type="project" value="UniProtKB-UniRule"/>
</dbReference>
<dbReference type="CDD" id="cd00956">
    <property type="entry name" value="Transaldolase_FSA"/>
    <property type="match status" value="1"/>
</dbReference>
<dbReference type="FunFam" id="3.20.20.70:FF:000018">
    <property type="entry name" value="Probable transaldolase"/>
    <property type="match status" value="1"/>
</dbReference>
<dbReference type="Gene3D" id="3.20.20.70">
    <property type="entry name" value="Aldolase class I"/>
    <property type="match status" value="1"/>
</dbReference>
<dbReference type="HAMAP" id="MF_00494">
    <property type="entry name" value="Transaldolase_3b"/>
    <property type="match status" value="1"/>
</dbReference>
<dbReference type="InterPro" id="IPR013785">
    <property type="entry name" value="Aldolase_TIM"/>
</dbReference>
<dbReference type="InterPro" id="IPR001585">
    <property type="entry name" value="TAL/FSA"/>
</dbReference>
<dbReference type="InterPro" id="IPR022999">
    <property type="entry name" value="Transaldolase_3B"/>
</dbReference>
<dbReference type="InterPro" id="IPR004731">
    <property type="entry name" value="Transaldolase_3B/F6P_aldolase"/>
</dbReference>
<dbReference type="InterPro" id="IPR018225">
    <property type="entry name" value="Transaldolase_AS"/>
</dbReference>
<dbReference type="InterPro" id="IPR033919">
    <property type="entry name" value="TSA/FSA_arc/bac"/>
</dbReference>
<dbReference type="NCBIfam" id="TIGR00875">
    <property type="entry name" value="fsa_talC_mipB"/>
    <property type="match status" value="1"/>
</dbReference>
<dbReference type="PANTHER" id="PTHR10683:SF40">
    <property type="entry name" value="FRUCTOSE-6-PHOSPHATE ALDOLASE 1-RELATED"/>
    <property type="match status" value="1"/>
</dbReference>
<dbReference type="PANTHER" id="PTHR10683">
    <property type="entry name" value="TRANSALDOLASE"/>
    <property type="match status" value="1"/>
</dbReference>
<dbReference type="Pfam" id="PF00923">
    <property type="entry name" value="TAL_FSA"/>
    <property type="match status" value="1"/>
</dbReference>
<dbReference type="SUPFAM" id="SSF51569">
    <property type="entry name" value="Aldolase"/>
    <property type="match status" value="1"/>
</dbReference>
<dbReference type="PROSITE" id="PS01054">
    <property type="entry name" value="TRANSALDOLASE_1"/>
    <property type="match status" value="1"/>
</dbReference>
<dbReference type="PROSITE" id="PS00958">
    <property type="entry name" value="TRANSALDOLASE_2"/>
    <property type="match status" value="1"/>
</dbReference>
<name>TAL_DESAH</name>
<gene>
    <name evidence="1" type="primary">tal</name>
    <name type="ordered locus">HRM2_27510</name>
</gene>
<comment type="function">
    <text evidence="1">Transaldolase is important for the balance of metabolites in the pentose-phosphate pathway.</text>
</comment>
<comment type="catalytic activity">
    <reaction evidence="1">
        <text>D-sedoheptulose 7-phosphate + D-glyceraldehyde 3-phosphate = D-erythrose 4-phosphate + beta-D-fructose 6-phosphate</text>
        <dbReference type="Rhea" id="RHEA:17053"/>
        <dbReference type="ChEBI" id="CHEBI:16897"/>
        <dbReference type="ChEBI" id="CHEBI:57483"/>
        <dbReference type="ChEBI" id="CHEBI:57634"/>
        <dbReference type="ChEBI" id="CHEBI:59776"/>
        <dbReference type="EC" id="2.2.1.2"/>
    </reaction>
</comment>
<comment type="pathway">
    <text evidence="1">Carbohydrate degradation; pentose phosphate pathway; D-glyceraldehyde 3-phosphate and beta-D-fructose 6-phosphate from D-ribose 5-phosphate and D-xylulose 5-phosphate (non-oxidative stage): step 2/3.</text>
</comment>
<comment type="subcellular location">
    <subcellularLocation>
        <location evidence="1">Cytoplasm</location>
    </subcellularLocation>
</comment>
<comment type="similarity">
    <text evidence="1">Belongs to the transaldolase family. Type 3B subfamily.</text>
</comment>
<evidence type="ECO:0000255" key="1">
    <source>
        <dbReference type="HAMAP-Rule" id="MF_00494"/>
    </source>
</evidence>
<protein>
    <recommendedName>
        <fullName evidence="1">Probable transaldolase</fullName>
        <ecNumber evidence="1">2.2.1.2</ecNumber>
    </recommendedName>
</protein>
<keyword id="KW-0963">Cytoplasm</keyword>
<keyword id="KW-0570">Pentose shunt</keyword>
<keyword id="KW-1185">Reference proteome</keyword>
<keyword id="KW-0704">Schiff base</keyword>
<keyword id="KW-0808">Transferase</keyword>
<feature type="chain" id="PRO_1000206469" description="Probable transaldolase">
    <location>
        <begin position="1"/>
        <end position="215"/>
    </location>
</feature>
<feature type="active site" description="Schiff-base intermediate with substrate" evidence="1">
    <location>
        <position position="83"/>
    </location>
</feature>
<proteinExistence type="inferred from homology"/>
<accession>C0QIA5</accession>
<sequence>MKFFIDTANIDEIKDALAMGMVDGVTTNPSLIAKEAGEFTDIIREICSIVEGPVSAEVISLDYDGMVKEARDLAKIADNIVVKIPMTVDGLKAVRTLTNEGIKTNVTLIFSATQALMAAKAGATYASPFVGRIDDLALDGMNLIEEIAEIYSNYMFDTQIIVASVRNPLHVLNSALIGADIATIPHKVLSALASHPLTDRGIESFMADWKKKENK</sequence>
<organism>
    <name type="scientific">Desulforapulum autotrophicum (strain ATCC 43914 / DSM 3382 / VKM B-1955 / HRM2)</name>
    <name type="common">Desulfobacterium autotrophicum</name>
    <dbReference type="NCBI Taxonomy" id="177437"/>
    <lineage>
        <taxon>Bacteria</taxon>
        <taxon>Pseudomonadati</taxon>
        <taxon>Thermodesulfobacteriota</taxon>
        <taxon>Desulfobacteria</taxon>
        <taxon>Desulfobacterales</taxon>
        <taxon>Desulfobacteraceae</taxon>
        <taxon>Desulforapulum</taxon>
    </lineage>
</organism>